<comment type="function">
    <text evidence="1">Regulates membrane-cell wall junctions and localized cell wall deposition. Required for establishment of the Casparian strip membrane domain (CSD) and the subsequent formation of Casparian strips, a cell wall modification of the root endodermis that determines an apoplastic barrier between the intraorganismal apoplasm and the extraorganismal apoplasm and prevents lateral diffusion (By similarity).</text>
</comment>
<comment type="subunit">
    <text evidence="1">Homodimer and heterodimers.</text>
</comment>
<comment type="subcellular location">
    <subcellularLocation>
        <location evidence="1">Cell membrane</location>
        <topology evidence="1">Multi-pass membrane protein</topology>
    </subcellularLocation>
    <text evidence="1">Very restricted localization following a belt shape within the plasma membrane which coincides with the position of the Casparian strip membrane domain in the root endodermis.</text>
</comment>
<comment type="similarity">
    <text evidence="3">Belongs to the Casparian strip membrane proteins (CASP) family.</text>
</comment>
<accession>D7LZ50</accession>
<proteinExistence type="inferred from homology"/>
<name>CASP4_ARALL</name>
<dbReference type="EMBL" id="GL348718">
    <property type="protein sequence ID" value="EFH47462.1"/>
    <property type="molecule type" value="Genomic_DNA"/>
</dbReference>
<dbReference type="STRING" id="81972.D7LZ50"/>
<dbReference type="EnsemblPlants" id="Al_scaffold_0006_539">
    <property type="protein sequence ID" value="Al_scaffold_0006_539"/>
    <property type="gene ID" value="Al_scaffold_0006_539"/>
</dbReference>
<dbReference type="Gramene" id="Al_scaffold_0006_539">
    <property type="protein sequence ID" value="Al_scaffold_0006_539"/>
    <property type="gene ID" value="Al_scaffold_0006_539"/>
</dbReference>
<dbReference type="KEGG" id="aly:9307273"/>
<dbReference type="eggNOG" id="ENOG502RYTF">
    <property type="taxonomic scope" value="Eukaryota"/>
</dbReference>
<dbReference type="HOGENOM" id="CLU_066104_3_1_1"/>
<dbReference type="OrthoDB" id="753675at2759"/>
<dbReference type="Proteomes" id="UP000008694">
    <property type="component" value="Unassembled WGS sequence"/>
</dbReference>
<dbReference type="GO" id="GO:0048226">
    <property type="term" value="C:Casparian strip"/>
    <property type="evidence" value="ECO:0007669"/>
    <property type="project" value="EnsemblPlants"/>
</dbReference>
<dbReference type="GO" id="GO:0005886">
    <property type="term" value="C:plasma membrane"/>
    <property type="evidence" value="ECO:0007669"/>
    <property type="project" value="UniProtKB-SubCell"/>
</dbReference>
<dbReference type="GO" id="GO:0042545">
    <property type="term" value="P:cell wall modification"/>
    <property type="evidence" value="ECO:0007669"/>
    <property type="project" value="EnsemblPlants"/>
</dbReference>
<dbReference type="GO" id="GO:0007043">
    <property type="term" value="P:cell-cell junction assembly"/>
    <property type="evidence" value="ECO:0007669"/>
    <property type="project" value="EnsemblPlants"/>
</dbReference>
<dbReference type="InterPro" id="IPR006459">
    <property type="entry name" value="CASP/CASPL"/>
</dbReference>
<dbReference type="InterPro" id="IPR006702">
    <property type="entry name" value="CASP_dom"/>
</dbReference>
<dbReference type="InterPro" id="IPR044173">
    <property type="entry name" value="CASPL"/>
</dbReference>
<dbReference type="NCBIfam" id="TIGR01569">
    <property type="entry name" value="A_tha_TIGR01569"/>
    <property type="match status" value="1"/>
</dbReference>
<dbReference type="PANTHER" id="PTHR36488:SF11">
    <property type="entry name" value="CASP-LIKE PROTEIN"/>
    <property type="match status" value="1"/>
</dbReference>
<dbReference type="PANTHER" id="PTHR36488">
    <property type="entry name" value="CASP-LIKE PROTEIN 1U1"/>
    <property type="match status" value="1"/>
</dbReference>
<dbReference type="Pfam" id="PF04535">
    <property type="entry name" value="CASP_dom"/>
    <property type="match status" value="1"/>
</dbReference>
<evidence type="ECO:0000250" key="1"/>
<evidence type="ECO:0000255" key="2"/>
<evidence type="ECO:0000305" key="3"/>
<gene>
    <name type="ORF">ARALYDRAFT_660474</name>
</gene>
<keyword id="KW-1003">Cell membrane</keyword>
<keyword id="KW-0961">Cell wall biogenesis/degradation</keyword>
<keyword id="KW-0472">Membrane</keyword>
<keyword id="KW-1185">Reference proteome</keyword>
<keyword id="KW-0812">Transmembrane</keyword>
<keyword id="KW-1133">Transmembrane helix</keyword>
<protein>
    <recommendedName>
        <fullName>Casparian strip membrane protein 4</fullName>
        <shortName>AlCASP4</shortName>
    </recommendedName>
</protein>
<feature type="chain" id="PRO_0000411998" description="Casparian strip membrane protein 4">
    <location>
        <begin position="1"/>
        <end position="202"/>
    </location>
</feature>
<feature type="topological domain" description="Cytoplasmic" evidence="2">
    <location>
        <begin position="1"/>
        <end position="40"/>
    </location>
</feature>
<feature type="transmembrane region" description="Helical" evidence="2">
    <location>
        <begin position="41"/>
        <end position="61"/>
    </location>
</feature>
<feature type="topological domain" description="Extracellular" evidence="2">
    <location>
        <begin position="62"/>
        <end position="90"/>
    </location>
</feature>
<feature type="transmembrane region" description="Helical" evidence="2">
    <location>
        <begin position="91"/>
        <end position="111"/>
    </location>
</feature>
<feature type="topological domain" description="Cytoplasmic" evidence="2">
    <location>
        <begin position="112"/>
        <end position="130"/>
    </location>
</feature>
<feature type="transmembrane region" description="Helical" evidence="2">
    <location>
        <begin position="131"/>
        <end position="151"/>
    </location>
</feature>
<feature type="topological domain" description="Extracellular" evidence="2">
    <location>
        <begin position="152"/>
        <end position="176"/>
    </location>
</feature>
<feature type="transmembrane region" description="Helical" evidence="2">
    <location>
        <begin position="177"/>
        <end position="197"/>
    </location>
</feature>
<feature type="topological domain" description="Cytoplasmic" evidence="2">
    <location>
        <begin position="198"/>
        <end position="202"/>
    </location>
</feature>
<sequence length="202" mass="21114">MKSDSIAVDVPAESSSAIKGKAPLLGLARDHTGSGGYKRGLSIFDFLLRLAAIVAALAAAATMGTSDETLPFFTQFLQFEASYDDLPTFQFFVVAIAIVTGYLVLSLPFSVVTIVRPLAVAPRLLLLVLDTAALALDTAAASAAAAIVYLAHNGNTNTNWLPICQQFGDFCQKTSGAVVSAFASVTFLAILVVISGVSLKRP</sequence>
<reference key="1">
    <citation type="journal article" date="2011" name="Nat. Genet.">
        <title>The Arabidopsis lyrata genome sequence and the basis of rapid genome size change.</title>
        <authorList>
            <person name="Hu T.T."/>
            <person name="Pattyn P."/>
            <person name="Bakker E.G."/>
            <person name="Cao J."/>
            <person name="Cheng J.-F."/>
            <person name="Clark R.M."/>
            <person name="Fahlgren N."/>
            <person name="Fawcett J.A."/>
            <person name="Grimwood J."/>
            <person name="Gundlach H."/>
            <person name="Haberer G."/>
            <person name="Hollister J.D."/>
            <person name="Ossowski S."/>
            <person name="Ottilar R.P."/>
            <person name="Salamov A.A."/>
            <person name="Schneeberger K."/>
            <person name="Spannagl M."/>
            <person name="Wang X."/>
            <person name="Yang L."/>
            <person name="Nasrallah M.E."/>
            <person name="Bergelson J."/>
            <person name="Carrington J.C."/>
            <person name="Gaut B.S."/>
            <person name="Schmutz J."/>
            <person name="Mayer K.F.X."/>
            <person name="Van de Peer Y."/>
            <person name="Grigoriev I.V."/>
            <person name="Nordborg M."/>
            <person name="Weigel D."/>
            <person name="Guo Y.-L."/>
        </authorList>
    </citation>
    <scope>NUCLEOTIDE SEQUENCE [LARGE SCALE GENOMIC DNA]</scope>
    <source>
        <strain>cv. MN47</strain>
    </source>
</reference>
<reference key="2">
    <citation type="journal article" date="2014" name="Plant Physiol.">
        <title>Functional and evolutionary analysis of the CASPARIAN STRIP MEMBRANE DOMAIN PROTEIN family.</title>
        <authorList>
            <person name="Roppolo D."/>
            <person name="Boeckmann B."/>
            <person name="Pfister A."/>
            <person name="Boutet E."/>
            <person name="Rubio M.C."/>
            <person name="Denervaud-Tendon V."/>
            <person name="Vermeer J.E."/>
            <person name="Gheyselinck J."/>
            <person name="Xenarios I."/>
            <person name="Geldner N."/>
        </authorList>
    </citation>
    <scope>GENE FAMILY</scope>
    <scope>NOMENCLATURE</scope>
</reference>
<organism>
    <name type="scientific">Arabidopsis lyrata subsp. lyrata</name>
    <name type="common">Lyre-leaved rock-cress</name>
    <dbReference type="NCBI Taxonomy" id="81972"/>
    <lineage>
        <taxon>Eukaryota</taxon>
        <taxon>Viridiplantae</taxon>
        <taxon>Streptophyta</taxon>
        <taxon>Embryophyta</taxon>
        <taxon>Tracheophyta</taxon>
        <taxon>Spermatophyta</taxon>
        <taxon>Magnoliopsida</taxon>
        <taxon>eudicotyledons</taxon>
        <taxon>Gunneridae</taxon>
        <taxon>Pentapetalae</taxon>
        <taxon>rosids</taxon>
        <taxon>malvids</taxon>
        <taxon>Brassicales</taxon>
        <taxon>Brassicaceae</taxon>
        <taxon>Camelineae</taxon>
        <taxon>Arabidopsis</taxon>
    </lineage>
</organism>